<proteinExistence type="inferred from homology"/>
<accession>Q1IMB2</accession>
<feature type="chain" id="PRO_1000020691" description="Glycerol kinase">
    <location>
        <begin position="1"/>
        <end position="498"/>
    </location>
</feature>
<feature type="binding site" evidence="1">
    <location>
        <position position="13"/>
    </location>
    <ligand>
        <name>ADP</name>
        <dbReference type="ChEBI" id="CHEBI:456216"/>
    </ligand>
</feature>
<feature type="binding site" evidence="1">
    <location>
        <position position="13"/>
    </location>
    <ligand>
        <name>ATP</name>
        <dbReference type="ChEBI" id="CHEBI:30616"/>
    </ligand>
</feature>
<feature type="binding site" evidence="1">
    <location>
        <position position="13"/>
    </location>
    <ligand>
        <name>sn-glycerol 3-phosphate</name>
        <dbReference type="ChEBI" id="CHEBI:57597"/>
    </ligand>
</feature>
<feature type="binding site" evidence="1">
    <location>
        <position position="14"/>
    </location>
    <ligand>
        <name>ATP</name>
        <dbReference type="ChEBI" id="CHEBI:30616"/>
    </ligand>
</feature>
<feature type="binding site" evidence="1">
    <location>
        <position position="15"/>
    </location>
    <ligand>
        <name>ATP</name>
        <dbReference type="ChEBI" id="CHEBI:30616"/>
    </ligand>
</feature>
<feature type="binding site" evidence="1">
    <location>
        <position position="17"/>
    </location>
    <ligand>
        <name>ADP</name>
        <dbReference type="ChEBI" id="CHEBI:456216"/>
    </ligand>
</feature>
<feature type="binding site" evidence="1">
    <location>
        <position position="83"/>
    </location>
    <ligand>
        <name>glycerol</name>
        <dbReference type="ChEBI" id="CHEBI:17754"/>
    </ligand>
</feature>
<feature type="binding site" evidence="1">
    <location>
        <position position="83"/>
    </location>
    <ligand>
        <name>sn-glycerol 3-phosphate</name>
        <dbReference type="ChEBI" id="CHEBI:57597"/>
    </ligand>
</feature>
<feature type="binding site" evidence="1">
    <location>
        <position position="84"/>
    </location>
    <ligand>
        <name>glycerol</name>
        <dbReference type="ChEBI" id="CHEBI:17754"/>
    </ligand>
</feature>
<feature type="binding site" evidence="1">
    <location>
        <position position="84"/>
    </location>
    <ligand>
        <name>sn-glycerol 3-phosphate</name>
        <dbReference type="ChEBI" id="CHEBI:57597"/>
    </ligand>
</feature>
<feature type="binding site" evidence="1">
    <location>
        <position position="135"/>
    </location>
    <ligand>
        <name>glycerol</name>
        <dbReference type="ChEBI" id="CHEBI:17754"/>
    </ligand>
</feature>
<feature type="binding site" evidence="1">
    <location>
        <position position="135"/>
    </location>
    <ligand>
        <name>sn-glycerol 3-phosphate</name>
        <dbReference type="ChEBI" id="CHEBI:57597"/>
    </ligand>
</feature>
<feature type="binding site" evidence="1">
    <location>
        <position position="244"/>
    </location>
    <ligand>
        <name>glycerol</name>
        <dbReference type="ChEBI" id="CHEBI:17754"/>
    </ligand>
</feature>
<feature type="binding site" evidence="1">
    <location>
        <position position="244"/>
    </location>
    <ligand>
        <name>sn-glycerol 3-phosphate</name>
        <dbReference type="ChEBI" id="CHEBI:57597"/>
    </ligand>
</feature>
<feature type="binding site" evidence="1">
    <location>
        <position position="245"/>
    </location>
    <ligand>
        <name>glycerol</name>
        <dbReference type="ChEBI" id="CHEBI:17754"/>
    </ligand>
</feature>
<feature type="binding site" evidence="1">
    <location>
        <position position="266"/>
    </location>
    <ligand>
        <name>ADP</name>
        <dbReference type="ChEBI" id="CHEBI:456216"/>
    </ligand>
</feature>
<feature type="binding site" evidence="1">
    <location>
        <position position="266"/>
    </location>
    <ligand>
        <name>ATP</name>
        <dbReference type="ChEBI" id="CHEBI:30616"/>
    </ligand>
</feature>
<feature type="binding site" evidence="1">
    <location>
        <position position="309"/>
    </location>
    <ligand>
        <name>ADP</name>
        <dbReference type="ChEBI" id="CHEBI:456216"/>
    </ligand>
</feature>
<feature type="binding site" evidence="1">
    <location>
        <position position="309"/>
    </location>
    <ligand>
        <name>ATP</name>
        <dbReference type="ChEBI" id="CHEBI:30616"/>
    </ligand>
</feature>
<feature type="binding site" evidence="1">
    <location>
        <position position="313"/>
    </location>
    <ligand>
        <name>ATP</name>
        <dbReference type="ChEBI" id="CHEBI:30616"/>
    </ligand>
</feature>
<feature type="binding site" evidence="1">
    <location>
        <position position="410"/>
    </location>
    <ligand>
        <name>ADP</name>
        <dbReference type="ChEBI" id="CHEBI:456216"/>
    </ligand>
</feature>
<feature type="binding site" evidence="1">
    <location>
        <position position="410"/>
    </location>
    <ligand>
        <name>ATP</name>
        <dbReference type="ChEBI" id="CHEBI:30616"/>
    </ligand>
</feature>
<feature type="binding site" evidence="1">
    <location>
        <position position="414"/>
    </location>
    <ligand>
        <name>ADP</name>
        <dbReference type="ChEBI" id="CHEBI:456216"/>
    </ligand>
</feature>
<keyword id="KW-0067">ATP-binding</keyword>
<keyword id="KW-0319">Glycerol metabolism</keyword>
<keyword id="KW-0418">Kinase</keyword>
<keyword id="KW-0547">Nucleotide-binding</keyword>
<keyword id="KW-1185">Reference proteome</keyword>
<keyword id="KW-0808">Transferase</keyword>
<gene>
    <name evidence="1" type="primary">glpK</name>
    <name type="ordered locus">Acid345_2987</name>
</gene>
<protein>
    <recommendedName>
        <fullName evidence="1">Glycerol kinase</fullName>
        <ecNumber evidence="1">2.7.1.30</ecNumber>
    </recommendedName>
    <alternativeName>
        <fullName evidence="1">ATP:glycerol 3-phosphotransferase</fullName>
    </alternativeName>
    <alternativeName>
        <fullName evidence="1">Glycerokinase</fullName>
        <shortName evidence="1">GK</shortName>
    </alternativeName>
</protein>
<dbReference type="EC" id="2.7.1.30" evidence="1"/>
<dbReference type="EMBL" id="CP000360">
    <property type="protein sequence ID" value="ABF41988.1"/>
    <property type="molecule type" value="Genomic_DNA"/>
</dbReference>
<dbReference type="RefSeq" id="WP_011523789.1">
    <property type="nucleotide sequence ID" value="NC_008009.1"/>
</dbReference>
<dbReference type="SMR" id="Q1IMB2"/>
<dbReference type="STRING" id="204669.Acid345_2987"/>
<dbReference type="EnsemblBacteria" id="ABF41988">
    <property type="protein sequence ID" value="ABF41988"/>
    <property type="gene ID" value="Acid345_2987"/>
</dbReference>
<dbReference type="KEGG" id="aba:Acid345_2987"/>
<dbReference type="eggNOG" id="COG0554">
    <property type="taxonomic scope" value="Bacteria"/>
</dbReference>
<dbReference type="HOGENOM" id="CLU_009281_2_3_0"/>
<dbReference type="OrthoDB" id="9805576at2"/>
<dbReference type="UniPathway" id="UPA00618">
    <property type="reaction ID" value="UER00672"/>
</dbReference>
<dbReference type="Proteomes" id="UP000002432">
    <property type="component" value="Chromosome"/>
</dbReference>
<dbReference type="GO" id="GO:0005829">
    <property type="term" value="C:cytosol"/>
    <property type="evidence" value="ECO:0007669"/>
    <property type="project" value="TreeGrafter"/>
</dbReference>
<dbReference type="GO" id="GO:0005524">
    <property type="term" value="F:ATP binding"/>
    <property type="evidence" value="ECO:0007669"/>
    <property type="project" value="UniProtKB-UniRule"/>
</dbReference>
<dbReference type="GO" id="GO:0004370">
    <property type="term" value="F:glycerol kinase activity"/>
    <property type="evidence" value="ECO:0000250"/>
    <property type="project" value="UniProtKB"/>
</dbReference>
<dbReference type="GO" id="GO:0019563">
    <property type="term" value="P:glycerol catabolic process"/>
    <property type="evidence" value="ECO:0007669"/>
    <property type="project" value="UniProtKB-UniRule"/>
</dbReference>
<dbReference type="GO" id="GO:0006071">
    <property type="term" value="P:glycerol metabolic process"/>
    <property type="evidence" value="ECO:0000250"/>
    <property type="project" value="UniProtKB"/>
</dbReference>
<dbReference type="GO" id="GO:0006072">
    <property type="term" value="P:glycerol-3-phosphate metabolic process"/>
    <property type="evidence" value="ECO:0007669"/>
    <property type="project" value="InterPro"/>
</dbReference>
<dbReference type="CDD" id="cd07786">
    <property type="entry name" value="FGGY_EcGK_like"/>
    <property type="match status" value="1"/>
</dbReference>
<dbReference type="FunFam" id="3.30.420.40:FF:000007">
    <property type="entry name" value="Glycerol kinase"/>
    <property type="match status" value="1"/>
</dbReference>
<dbReference type="FunFam" id="3.30.420.40:FF:000008">
    <property type="entry name" value="Glycerol kinase"/>
    <property type="match status" value="1"/>
</dbReference>
<dbReference type="Gene3D" id="3.30.420.40">
    <property type="match status" value="2"/>
</dbReference>
<dbReference type="HAMAP" id="MF_00186">
    <property type="entry name" value="Glycerol_kin"/>
    <property type="match status" value="1"/>
</dbReference>
<dbReference type="InterPro" id="IPR043129">
    <property type="entry name" value="ATPase_NBD"/>
</dbReference>
<dbReference type="InterPro" id="IPR000577">
    <property type="entry name" value="Carb_kinase_FGGY"/>
</dbReference>
<dbReference type="InterPro" id="IPR018483">
    <property type="entry name" value="Carb_kinase_FGGY_CS"/>
</dbReference>
<dbReference type="InterPro" id="IPR018485">
    <property type="entry name" value="FGGY_C"/>
</dbReference>
<dbReference type="InterPro" id="IPR018484">
    <property type="entry name" value="FGGY_N"/>
</dbReference>
<dbReference type="InterPro" id="IPR005999">
    <property type="entry name" value="Glycerol_kin"/>
</dbReference>
<dbReference type="NCBIfam" id="TIGR01311">
    <property type="entry name" value="glycerol_kin"/>
    <property type="match status" value="1"/>
</dbReference>
<dbReference type="NCBIfam" id="NF000756">
    <property type="entry name" value="PRK00047.1"/>
    <property type="match status" value="1"/>
</dbReference>
<dbReference type="PANTHER" id="PTHR10196:SF69">
    <property type="entry name" value="GLYCEROL KINASE"/>
    <property type="match status" value="1"/>
</dbReference>
<dbReference type="PANTHER" id="PTHR10196">
    <property type="entry name" value="SUGAR KINASE"/>
    <property type="match status" value="1"/>
</dbReference>
<dbReference type="Pfam" id="PF02782">
    <property type="entry name" value="FGGY_C"/>
    <property type="match status" value="1"/>
</dbReference>
<dbReference type="Pfam" id="PF00370">
    <property type="entry name" value="FGGY_N"/>
    <property type="match status" value="1"/>
</dbReference>
<dbReference type="PIRSF" id="PIRSF000538">
    <property type="entry name" value="GlpK"/>
    <property type="match status" value="1"/>
</dbReference>
<dbReference type="SUPFAM" id="SSF53067">
    <property type="entry name" value="Actin-like ATPase domain"/>
    <property type="match status" value="2"/>
</dbReference>
<dbReference type="PROSITE" id="PS00933">
    <property type="entry name" value="FGGY_KINASES_1"/>
    <property type="match status" value="1"/>
</dbReference>
<dbReference type="PROSITE" id="PS00445">
    <property type="entry name" value="FGGY_KINASES_2"/>
    <property type="match status" value="1"/>
</dbReference>
<organism>
    <name type="scientific">Koribacter versatilis (strain Ellin345)</name>
    <dbReference type="NCBI Taxonomy" id="204669"/>
    <lineage>
        <taxon>Bacteria</taxon>
        <taxon>Pseudomonadati</taxon>
        <taxon>Acidobacteriota</taxon>
        <taxon>Terriglobia</taxon>
        <taxon>Terriglobales</taxon>
        <taxon>Candidatus Korobacteraceae</taxon>
        <taxon>Candidatus Korobacter</taxon>
    </lineage>
</organism>
<reference key="1">
    <citation type="journal article" date="2009" name="Appl. Environ. Microbiol.">
        <title>Three genomes from the phylum Acidobacteria provide insight into the lifestyles of these microorganisms in soils.</title>
        <authorList>
            <person name="Ward N.L."/>
            <person name="Challacombe J.F."/>
            <person name="Janssen P.H."/>
            <person name="Henrissat B."/>
            <person name="Coutinho P.M."/>
            <person name="Wu M."/>
            <person name="Xie G."/>
            <person name="Haft D.H."/>
            <person name="Sait M."/>
            <person name="Badger J."/>
            <person name="Barabote R.D."/>
            <person name="Bradley B."/>
            <person name="Brettin T.S."/>
            <person name="Brinkac L.M."/>
            <person name="Bruce D."/>
            <person name="Creasy T."/>
            <person name="Daugherty S.C."/>
            <person name="Davidsen T.M."/>
            <person name="DeBoy R.T."/>
            <person name="Detter J.C."/>
            <person name="Dodson R.J."/>
            <person name="Durkin A.S."/>
            <person name="Ganapathy A."/>
            <person name="Gwinn-Giglio M."/>
            <person name="Han C.S."/>
            <person name="Khouri H."/>
            <person name="Kiss H."/>
            <person name="Kothari S.P."/>
            <person name="Madupu R."/>
            <person name="Nelson K.E."/>
            <person name="Nelson W.C."/>
            <person name="Paulsen I."/>
            <person name="Penn K."/>
            <person name="Ren Q."/>
            <person name="Rosovitz M.J."/>
            <person name="Selengut J.D."/>
            <person name="Shrivastava S."/>
            <person name="Sullivan S.A."/>
            <person name="Tapia R."/>
            <person name="Thompson L.S."/>
            <person name="Watkins K.L."/>
            <person name="Yang Q."/>
            <person name="Yu C."/>
            <person name="Zafar N."/>
            <person name="Zhou L."/>
            <person name="Kuske C.R."/>
        </authorList>
    </citation>
    <scope>NUCLEOTIDE SEQUENCE [LARGE SCALE GENOMIC DNA]</scope>
    <source>
        <strain>Ellin345</strain>
    </source>
</reference>
<comment type="function">
    <text evidence="1">Key enzyme in the regulation of glycerol uptake and metabolism. Catalyzes the phosphorylation of glycerol to yield sn-glycerol 3-phosphate.</text>
</comment>
<comment type="catalytic activity">
    <reaction evidence="1">
        <text>glycerol + ATP = sn-glycerol 3-phosphate + ADP + H(+)</text>
        <dbReference type="Rhea" id="RHEA:21644"/>
        <dbReference type="ChEBI" id="CHEBI:15378"/>
        <dbReference type="ChEBI" id="CHEBI:17754"/>
        <dbReference type="ChEBI" id="CHEBI:30616"/>
        <dbReference type="ChEBI" id="CHEBI:57597"/>
        <dbReference type="ChEBI" id="CHEBI:456216"/>
        <dbReference type="EC" id="2.7.1.30"/>
    </reaction>
</comment>
<comment type="activity regulation">
    <text evidence="1">Inhibited by fructose 1,6-bisphosphate (FBP).</text>
</comment>
<comment type="pathway">
    <text evidence="1">Polyol metabolism; glycerol degradation via glycerol kinase pathway; sn-glycerol 3-phosphate from glycerol: step 1/1.</text>
</comment>
<comment type="similarity">
    <text evidence="1">Belongs to the FGGY kinase family.</text>
</comment>
<evidence type="ECO:0000255" key="1">
    <source>
        <dbReference type="HAMAP-Rule" id="MF_00186"/>
    </source>
</evidence>
<sequence length="498" mass="54524">MRLPYILALDQGTTSSRAIVFDQDGVVRSVAQREFTQIFPQAGWVEHDPEEIWASQISVAVEALSRAELRSRHVAAIAITNQRETAVVWDRETGRPVYNAIVWQDRRTAGFCDQLKAAGHEEFVQQRTGLLIDSYFSGSKVRWILDNVPQARSLAERGRLAFGTVDSWLIWKLTSGKLHITDVSNASRTMLFNIHTCQWDEELLRLLEIPASMLPEVRSSSEVYGTVQTSLGLESIPIAGIAGDQQASLFGQRCTSPGMAKNTYGTGCFMLQNTGERAVPTSNRLVTTVAWKIGDVVEYALEGSVFIGGAVVQWLRDGLRLVRSSGEFQELANSVKDNGGVYVVPAFVGLGAPHWDQYARGGIFGITRGTTDGHVARAALESIAYQVADLLDAMQRDTGVPLPELRVDGGAAANETLLQFQADIMGVPVVRPSVTETTALGAAFLAGIAVGLWSDPQVIAKMPVEQKRFEPRMGSAEALALRHQWEKALSRVKGWEEA</sequence>
<name>GLPK_KORVE</name>